<proteinExistence type="inferred from homology"/>
<feature type="chain" id="PRO_0000270870" description="Type III pantothenate kinase">
    <location>
        <begin position="1"/>
        <end position="270"/>
    </location>
</feature>
<feature type="active site" description="Proton acceptor" evidence="1">
    <location>
        <position position="105"/>
    </location>
</feature>
<feature type="binding site" evidence="1">
    <location>
        <begin position="11"/>
        <end position="18"/>
    </location>
    <ligand>
        <name>ATP</name>
        <dbReference type="ChEBI" id="CHEBI:30616"/>
    </ligand>
</feature>
<feature type="binding site" evidence="1">
    <location>
        <position position="96"/>
    </location>
    <ligand>
        <name>substrate</name>
    </ligand>
</feature>
<feature type="binding site" evidence="1">
    <location>
        <begin position="103"/>
        <end position="106"/>
    </location>
    <ligand>
        <name>substrate</name>
    </ligand>
</feature>
<feature type="binding site" evidence="1">
    <location>
        <position position="129"/>
    </location>
    <ligand>
        <name>ATP</name>
        <dbReference type="ChEBI" id="CHEBI:30616"/>
    </ligand>
</feature>
<feature type="binding site" evidence="1">
    <location>
        <position position="195"/>
    </location>
    <ligand>
        <name>substrate</name>
    </ligand>
</feature>
<keyword id="KW-0067">ATP-binding</keyword>
<keyword id="KW-0173">Coenzyme A biosynthesis</keyword>
<keyword id="KW-0963">Cytoplasm</keyword>
<keyword id="KW-0418">Kinase</keyword>
<keyword id="KW-0547">Nucleotide-binding</keyword>
<keyword id="KW-0630">Potassium</keyword>
<keyword id="KW-1185">Reference proteome</keyword>
<keyword id="KW-0808">Transferase</keyword>
<dbReference type="EC" id="2.7.1.33" evidence="1"/>
<dbReference type="EMBL" id="CP000270">
    <property type="protein sequence ID" value="ABE28773.1"/>
    <property type="molecule type" value="Genomic_DNA"/>
</dbReference>
<dbReference type="RefSeq" id="WP_011486614.1">
    <property type="nucleotide sequence ID" value="NC_007951.1"/>
</dbReference>
<dbReference type="SMR" id="Q146G6"/>
<dbReference type="STRING" id="266265.Bxe_A4227"/>
<dbReference type="KEGG" id="bxb:DR64_1904"/>
<dbReference type="KEGG" id="bxe:Bxe_A4227"/>
<dbReference type="PATRIC" id="fig|266265.5.peg.248"/>
<dbReference type="eggNOG" id="COG1521">
    <property type="taxonomic scope" value="Bacteria"/>
</dbReference>
<dbReference type="OrthoDB" id="9781305at2"/>
<dbReference type="UniPathway" id="UPA00241">
    <property type="reaction ID" value="UER00352"/>
</dbReference>
<dbReference type="Proteomes" id="UP000001817">
    <property type="component" value="Chromosome 1"/>
</dbReference>
<dbReference type="GO" id="GO:0005737">
    <property type="term" value="C:cytoplasm"/>
    <property type="evidence" value="ECO:0007669"/>
    <property type="project" value="UniProtKB-SubCell"/>
</dbReference>
<dbReference type="GO" id="GO:0005524">
    <property type="term" value="F:ATP binding"/>
    <property type="evidence" value="ECO:0007669"/>
    <property type="project" value="UniProtKB-UniRule"/>
</dbReference>
<dbReference type="GO" id="GO:0004594">
    <property type="term" value="F:pantothenate kinase activity"/>
    <property type="evidence" value="ECO:0007669"/>
    <property type="project" value="UniProtKB-UniRule"/>
</dbReference>
<dbReference type="GO" id="GO:0015937">
    <property type="term" value="P:coenzyme A biosynthetic process"/>
    <property type="evidence" value="ECO:0007669"/>
    <property type="project" value="UniProtKB-UniRule"/>
</dbReference>
<dbReference type="CDD" id="cd24015">
    <property type="entry name" value="ASKHA_NBD_PanK-III"/>
    <property type="match status" value="1"/>
</dbReference>
<dbReference type="Gene3D" id="3.30.420.40">
    <property type="match status" value="2"/>
</dbReference>
<dbReference type="HAMAP" id="MF_01274">
    <property type="entry name" value="Pantothen_kinase_3"/>
    <property type="match status" value="1"/>
</dbReference>
<dbReference type="InterPro" id="IPR043129">
    <property type="entry name" value="ATPase_NBD"/>
</dbReference>
<dbReference type="InterPro" id="IPR004619">
    <property type="entry name" value="Type_III_PanK"/>
</dbReference>
<dbReference type="NCBIfam" id="TIGR00671">
    <property type="entry name" value="baf"/>
    <property type="match status" value="1"/>
</dbReference>
<dbReference type="NCBIfam" id="NF009868">
    <property type="entry name" value="PRK13328.1-4"/>
    <property type="match status" value="1"/>
</dbReference>
<dbReference type="PANTHER" id="PTHR34265">
    <property type="entry name" value="TYPE III PANTOTHENATE KINASE"/>
    <property type="match status" value="1"/>
</dbReference>
<dbReference type="PANTHER" id="PTHR34265:SF1">
    <property type="entry name" value="TYPE III PANTOTHENATE KINASE"/>
    <property type="match status" value="1"/>
</dbReference>
<dbReference type="Pfam" id="PF03309">
    <property type="entry name" value="Pan_kinase"/>
    <property type="match status" value="1"/>
</dbReference>
<dbReference type="SUPFAM" id="SSF53067">
    <property type="entry name" value="Actin-like ATPase domain"/>
    <property type="match status" value="2"/>
</dbReference>
<accession>Q146G6</accession>
<comment type="function">
    <text evidence="1">Catalyzes the phosphorylation of pantothenate (Pan), the first step in CoA biosynthesis.</text>
</comment>
<comment type="catalytic activity">
    <reaction evidence="1">
        <text>(R)-pantothenate + ATP = (R)-4'-phosphopantothenate + ADP + H(+)</text>
        <dbReference type="Rhea" id="RHEA:16373"/>
        <dbReference type="ChEBI" id="CHEBI:10986"/>
        <dbReference type="ChEBI" id="CHEBI:15378"/>
        <dbReference type="ChEBI" id="CHEBI:29032"/>
        <dbReference type="ChEBI" id="CHEBI:30616"/>
        <dbReference type="ChEBI" id="CHEBI:456216"/>
        <dbReference type="EC" id="2.7.1.33"/>
    </reaction>
</comment>
<comment type="cofactor">
    <cofactor evidence="1">
        <name>NH4(+)</name>
        <dbReference type="ChEBI" id="CHEBI:28938"/>
    </cofactor>
    <cofactor evidence="1">
        <name>K(+)</name>
        <dbReference type="ChEBI" id="CHEBI:29103"/>
    </cofactor>
    <text evidence="1">A monovalent cation. Ammonium or potassium.</text>
</comment>
<comment type="pathway">
    <text evidence="1">Cofactor biosynthesis; coenzyme A biosynthesis; CoA from (R)-pantothenate: step 1/5.</text>
</comment>
<comment type="subunit">
    <text evidence="1">Homodimer.</text>
</comment>
<comment type="subcellular location">
    <subcellularLocation>
        <location evidence="1">Cytoplasm</location>
    </subcellularLocation>
</comment>
<comment type="similarity">
    <text evidence="1">Belongs to the type III pantothenate kinase family.</text>
</comment>
<name>COAX_PARXL</name>
<gene>
    <name evidence="1" type="primary">coaX</name>
    <name type="ordered locus">Bxeno_A0235</name>
    <name type="ORF">Bxe_A4227</name>
</gene>
<protein>
    <recommendedName>
        <fullName evidence="1">Type III pantothenate kinase</fullName>
        <ecNumber evidence="1">2.7.1.33</ecNumber>
    </recommendedName>
    <alternativeName>
        <fullName evidence="1">PanK-III</fullName>
    </alternativeName>
    <alternativeName>
        <fullName evidence="1">Pantothenic acid kinase</fullName>
    </alternativeName>
</protein>
<reference key="1">
    <citation type="journal article" date="2006" name="Proc. Natl. Acad. Sci. U.S.A.">
        <title>Burkholderia xenovorans LB400 harbors a multi-replicon, 9.73-Mbp genome shaped for versatility.</title>
        <authorList>
            <person name="Chain P.S.G."/>
            <person name="Denef V.J."/>
            <person name="Konstantinidis K.T."/>
            <person name="Vergez L.M."/>
            <person name="Agullo L."/>
            <person name="Reyes V.L."/>
            <person name="Hauser L."/>
            <person name="Cordova M."/>
            <person name="Gomez L."/>
            <person name="Gonzalez M."/>
            <person name="Land M."/>
            <person name="Lao V."/>
            <person name="Larimer F."/>
            <person name="LiPuma J.J."/>
            <person name="Mahenthiralingam E."/>
            <person name="Malfatti S.A."/>
            <person name="Marx C.J."/>
            <person name="Parnell J.J."/>
            <person name="Ramette A."/>
            <person name="Richardson P."/>
            <person name="Seeger M."/>
            <person name="Smith D."/>
            <person name="Spilker T."/>
            <person name="Sul W.J."/>
            <person name="Tsoi T.V."/>
            <person name="Ulrich L.E."/>
            <person name="Zhulin I.B."/>
            <person name="Tiedje J.M."/>
        </authorList>
    </citation>
    <scope>NUCLEOTIDE SEQUENCE [LARGE SCALE GENOMIC DNA]</scope>
    <source>
        <strain>LB400</strain>
    </source>
</reference>
<sequence>MTSGAPCLLIDAGNSRIKWALVQAGGSQIASGALTHGGEHQPDWLSLPTPGGAWLSNVAGESVARRIAALLEARWPQLPLTTISACAQQCGVTNSYTAPHMLGSDRWAGLIGAHAAFPGEHLLIATFGTATTLEALRADGCFVGGLIAPGWTLMMRSLGEHTAQLPTLDASAARGLLDGSTRDAARRGPFFATDTPRSLSAGCTLAQAGLVERMWRDLQDEWQVPVRLVVSGGAVDEVASALKVPHTRHDSLVLSGLALIAAGRAAERGA</sequence>
<evidence type="ECO:0000255" key="1">
    <source>
        <dbReference type="HAMAP-Rule" id="MF_01274"/>
    </source>
</evidence>
<organism>
    <name type="scientific">Paraburkholderia xenovorans (strain LB400)</name>
    <dbReference type="NCBI Taxonomy" id="266265"/>
    <lineage>
        <taxon>Bacteria</taxon>
        <taxon>Pseudomonadati</taxon>
        <taxon>Pseudomonadota</taxon>
        <taxon>Betaproteobacteria</taxon>
        <taxon>Burkholderiales</taxon>
        <taxon>Burkholderiaceae</taxon>
        <taxon>Paraburkholderia</taxon>
    </lineage>
</organism>